<evidence type="ECO:0000255" key="1">
    <source>
        <dbReference type="HAMAP-Rule" id="MF_00300"/>
    </source>
</evidence>
<evidence type="ECO:0000305" key="2"/>
<keyword id="KW-0028">Amino-acid biosynthesis</keyword>
<keyword id="KW-0057">Aromatic amino acid biosynthesis</keyword>
<keyword id="KW-0274">FAD</keyword>
<keyword id="KW-0285">Flavoprotein</keyword>
<keyword id="KW-0288">FMN</keyword>
<keyword id="KW-0456">Lyase</keyword>
<keyword id="KW-0521">NADP</keyword>
<protein>
    <recommendedName>
        <fullName evidence="1">Chorismate synthase</fullName>
        <shortName evidence="1">CS</shortName>
        <ecNumber evidence="1">4.2.3.5</ecNumber>
    </recommendedName>
    <alternativeName>
        <fullName evidence="1">5-enolpyruvylshikimate-3-phosphate phospholyase</fullName>
    </alternativeName>
</protein>
<proteinExistence type="inferred from homology"/>
<organism>
    <name type="scientific">Buchnera aphidicola subsp. Schizaphis graminum (strain Sg)</name>
    <dbReference type="NCBI Taxonomy" id="198804"/>
    <lineage>
        <taxon>Bacteria</taxon>
        <taxon>Pseudomonadati</taxon>
        <taxon>Pseudomonadota</taxon>
        <taxon>Gammaproteobacteria</taxon>
        <taxon>Enterobacterales</taxon>
        <taxon>Erwiniaceae</taxon>
        <taxon>Buchnera</taxon>
    </lineage>
</organism>
<feature type="chain" id="PRO_0000140564" description="Chorismate synthase">
    <location>
        <begin position="1"/>
        <end position="353"/>
    </location>
</feature>
<feature type="binding site" evidence="1">
    <location>
        <position position="48"/>
    </location>
    <ligand>
        <name>NADP(+)</name>
        <dbReference type="ChEBI" id="CHEBI:58349"/>
    </ligand>
</feature>
<feature type="binding site" evidence="1">
    <location>
        <position position="54"/>
    </location>
    <ligand>
        <name>NADP(+)</name>
        <dbReference type="ChEBI" id="CHEBI:58349"/>
    </ligand>
</feature>
<feature type="binding site" evidence="1">
    <location>
        <begin position="125"/>
        <end position="127"/>
    </location>
    <ligand>
        <name>FMN</name>
        <dbReference type="ChEBI" id="CHEBI:58210"/>
    </ligand>
</feature>
<feature type="binding site" evidence="1">
    <location>
        <begin position="238"/>
        <end position="239"/>
    </location>
    <ligand>
        <name>FMN</name>
        <dbReference type="ChEBI" id="CHEBI:58210"/>
    </ligand>
</feature>
<feature type="binding site" evidence="1">
    <location>
        <position position="278"/>
    </location>
    <ligand>
        <name>FMN</name>
        <dbReference type="ChEBI" id="CHEBI:58210"/>
    </ligand>
</feature>
<feature type="binding site" evidence="1">
    <location>
        <begin position="293"/>
        <end position="297"/>
    </location>
    <ligand>
        <name>FMN</name>
        <dbReference type="ChEBI" id="CHEBI:58210"/>
    </ligand>
</feature>
<feature type="binding site" evidence="1">
    <location>
        <position position="319"/>
    </location>
    <ligand>
        <name>FMN</name>
        <dbReference type="ChEBI" id="CHEBI:58210"/>
    </ligand>
</feature>
<feature type="sequence conflict" description="In Ref. 1; AAC97352." evidence="2" ref="1">
    <original>GTTTG</original>
    <variation>EQLQE</variation>
    <location>
        <begin position="74"/>
        <end position="78"/>
    </location>
</feature>
<feature type="sequence conflict" description="In Ref. 1; AAC97352." evidence="2" ref="1">
    <original>A</original>
    <variation>R</variation>
    <location>
        <position position="159"/>
    </location>
</feature>
<comment type="function">
    <text evidence="1">Catalyzes the anti-1,4-elimination of the C-3 phosphate and the C-6 proR hydrogen from 5-enolpyruvylshikimate-3-phosphate (EPSP) to yield chorismate, which is the branch point compound that serves as the starting substrate for the three terminal pathways of aromatic amino acid biosynthesis. This reaction introduces a second double bond into the aromatic ring system.</text>
</comment>
<comment type="catalytic activity">
    <reaction evidence="1">
        <text>5-O-(1-carboxyvinyl)-3-phosphoshikimate = chorismate + phosphate</text>
        <dbReference type="Rhea" id="RHEA:21020"/>
        <dbReference type="ChEBI" id="CHEBI:29748"/>
        <dbReference type="ChEBI" id="CHEBI:43474"/>
        <dbReference type="ChEBI" id="CHEBI:57701"/>
        <dbReference type="EC" id="4.2.3.5"/>
    </reaction>
</comment>
<comment type="cofactor">
    <cofactor evidence="1">
        <name>FMNH2</name>
        <dbReference type="ChEBI" id="CHEBI:57618"/>
    </cofactor>
    <text evidence="1">Reduced FMN (FMNH(2)).</text>
</comment>
<comment type="pathway">
    <text evidence="1">Metabolic intermediate biosynthesis; chorismate biosynthesis; chorismate from D-erythrose 4-phosphate and phosphoenolpyruvate: step 7/7.</text>
</comment>
<comment type="subunit">
    <text evidence="1">Homotetramer.</text>
</comment>
<comment type="similarity">
    <text evidence="1">Belongs to the chorismate synthase family.</text>
</comment>
<dbReference type="EC" id="4.2.3.5" evidence="1"/>
<dbReference type="EMBL" id="AF067228">
    <property type="protein sequence ID" value="AAC97352.1"/>
    <property type="molecule type" value="Genomic_DNA"/>
</dbReference>
<dbReference type="EMBL" id="AE013218">
    <property type="protein sequence ID" value="AAM67660.1"/>
    <property type="molecule type" value="Genomic_DNA"/>
</dbReference>
<dbReference type="RefSeq" id="WP_011053626.1">
    <property type="nucleotide sequence ID" value="NC_004061.1"/>
</dbReference>
<dbReference type="SMR" id="Q9ZHE9"/>
<dbReference type="STRING" id="198804.BUsg_090"/>
<dbReference type="GeneID" id="93003559"/>
<dbReference type="KEGG" id="bas:BUsg_090"/>
<dbReference type="eggNOG" id="COG0082">
    <property type="taxonomic scope" value="Bacteria"/>
</dbReference>
<dbReference type="HOGENOM" id="CLU_034547_0_2_6"/>
<dbReference type="UniPathway" id="UPA00053">
    <property type="reaction ID" value="UER00090"/>
</dbReference>
<dbReference type="Proteomes" id="UP000000416">
    <property type="component" value="Chromosome"/>
</dbReference>
<dbReference type="GO" id="GO:0005829">
    <property type="term" value="C:cytosol"/>
    <property type="evidence" value="ECO:0007669"/>
    <property type="project" value="TreeGrafter"/>
</dbReference>
<dbReference type="GO" id="GO:0004107">
    <property type="term" value="F:chorismate synthase activity"/>
    <property type="evidence" value="ECO:0007669"/>
    <property type="project" value="UniProtKB-UniRule"/>
</dbReference>
<dbReference type="GO" id="GO:0010181">
    <property type="term" value="F:FMN binding"/>
    <property type="evidence" value="ECO:0007669"/>
    <property type="project" value="TreeGrafter"/>
</dbReference>
<dbReference type="GO" id="GO:0008652">
    <property type="term" value="P:amino acid biosynthetic process"/>
    <property type="evidence" value="ECO:0007669"/>
    <property type="project" value="UniProtKB-KW"/>
</dbReference>
<dbReference type="GO" id="GO:0009073">
    <property type="term" value="P:aromatic amino acid family biosynthetic process"/>
    <property type="evidence" value="ECO:0007669"/>
    <property type="project" value="UniProtKB-KW"/>
</dbReference>
<dbReference type="GO" id="GO:0009423">
    <property type="term" value="P:chorismate biosynthetic process"/>
    <property type="evidence" value="ECO:0007669"/>
    <property type="project" value="UniProtKB-UniRule"/>
</dbReference>
<dbReference type="CDD" id="cd07304">
    <property type="entry name" value="Chorismate_synthase"/>
    <property type="match status" value="1"/>
</dbReference>
<dbReference type="FunFam" id="3.60.150.10:FF:000001">
    <property type="entry name" value="Chorismate synthase"/>
    <property type="match status" value="1"/>
</dbReference>
<dbReference type="Gene3D" id="3.60.150.10">
    <property type="entry name" value="Chorismate synthase AroC"/>
    <property type="match status" value="1"/>
</dbReference>
<dbReference type="HAMAP" id="MF_00300">
    <property type="entry name" value="Chorismate_synth"/>
    <property type="match status" value="1"/>
</dbReference>
<dbReference type="InterPro" id="IPR000453">
    <property type="entry name" value="Chorismate_synth"/>
</dbReference>
<dbReference type="InterPro" id="IPR035904">
    <property type="entry name" value="Chorismate_synth_AroC_sf"/>
</dbReference>
<dbReference type="InterPro" id="IPR020541">
    <property type="entry name" value="Chorismate_synthase_CS"/>
</dbReference>
<dbReference type="NCBIfam" id="TIGR00033">
    <property type="entry name" value="aroC"/>
    <property type="match status" value="1"/>
</dbReference>
<dbReference type="NCBIfam" id="NF003793">
    <property type="entry name" value="PRK05382.1"/>
    <property type="match status" value="1"/>
</dbReference>
<dbReference type="PANTHER" id="PTHR21085">
    <property type="entry name" value="CHORISMATE SYNTHASE"/>
    <property type="match status" value="1"/>
</dbReference>
<dbReference type="PANTHER" id="PTHR21085:SF0">
    <property type="entry name" value="CHORISMATE SYNTHASE"/>
    <property type="match status" value="1"/>
</dbReference>
<dbReference type="Pfam" id="PF01264">
    <property type="entry name" value="Chorismate_synt"/>
    <property type="match status" value="1"/>
</dbReference>
<dbReference type="PIRSF" id="PIRSF001456">
    <property type="entry name" value="Chorismate_synth"/>
    <property type="match status" value="1"/>
</dbReference>
<dbReference type="SUPFAM" id="SSF103263">
    <property type="entry name" value="Chorismate synthase, AroC"/>
    <property type="match status" value="1"/>
</dbReference>
<dbReference type="PROSITE" id="PS00787">
    <property type="entry name" value="CHORISMATE_SYNTHASE_1"/>
    <property type="match status" value="1"/>
</dbReference>
<dbReference type="PROSITE" id="PS00788">
    <property type="entry name" value="CHORISMATE_SYNTHASE_2"/>
    <property type="match status" value="1"/>
</dbReference>
<dbReference type="PROSITE" id="PS00789">
    <property type="entry name" value="CHORISMATE_SYNTHASE_3"/>
    <property type="match status" value="1"/>
</dbReference>
<sequence length="353" mass="38646">MAGNTIGKVFRVTTFGESHGTALGCVIDGMPPGLELSSDDLQYDLNRRRPGTSRYTTQRSELDEVQILSGVFKGTTTGTSIGLVIQNKDQRSQDYSEIKDLFRPGHADYTYEKKYGIRDYRGGGRSSARETAMRVAAGSIAKKYLKIQTGIVIRAYLSAMGDIKCPFESWEEVEQNPFFCSNKNKVFQLEELIKKLKKTGDSIGAEITIIAQNVPVGFGEPVFDRLDADLAHALMSINAAKGVEIGDGFSVVNQKGSENRDEMTPNGFKSNHCGGILGGISNGENIFLKVAFKPTSSIRQSGNTINKNNEKVKIVIKGRHDPCVGIRAVPIAEAMVAIVLMDHLLRFRAQCAK</sequence>
<gene>
    <name evidence="1" type="primary">aroC</name>
    <name type="ordered locus">BUsg_090</name>
</gene>
<accession>Q9ZHE9</accession>
<name>AROC_BUCAP</name>
<reference key="1">
    <citation type="journal article" date="1998" name="Curr. Microbiol.">
        <title>Buchnera aphidicola (Aphid endosymbiont) contains genes encoding enzymes of histidine biosynthesis.</title>
        <authorList>
            <person name="Clark M.A."/>
            <person name="Baumann L."/>
            <person name="Baumann P."/>
        </authorList>
    </citation>
    <scope>NUCLEOTIDE SEQUENCE [GENOMIC DNA]</scope>
</reference>
<reference key="2">
    <citation type="journal article" date="2002" name="Science">
        <title>50 million years of genomic stasis in endosymbiotic bacteria.</title>
        <authorList>
            <person name="Tamas I."/>
            <person name="Klasson L."/>
            <person name="Canbaeck B."/>
            <person name="Naeslund A.K."/>
            <person name="Eriksson A.-S."/>
            <person name="Wernegreen J.J."/>
            <person name="Sandstroem J.P."/>
            <person name="Moran N.A."/>
            <person name="Andersson S.G.E."/>
        </authorList>
    </citation>
    <scope>NUCLEOTIDE SEQUENCE [LARGE SCALE GENOMIC DNA]</scope>
    <source>
        <strain>Sg</strain>
    </source>
</reference>